<evidence type="ECO:0000255" key="1">
    <source>
        <dbReference type="HAMAP-Rule" id="MF_00693"/>
    </source>
</evidence>
<proteinExistence type="inferred from homology"/>
<organism>
    <name type="scientific">Cupriavidus metallidurans (strain ATCC 43123 / DSM 2839 / NBRC 102507 / CH34)</name>
    <name type="common">Ralstonia metallidurans</name>
    <dbReference type="NCBI Taxonomy" id="266264"/>
    <lineage>
        <taxon>Bacteria</taxon>
        <taxon>Pseudomonadati</taxon>
        <taxon>Pseudomonadota</taxon>
        <taxon>Betaproteobacteria</taxon>
        <taxon>Burkholderiales</taxon>
        <taxon>Burkholderiaceae</taxon>
        <taxon>Cupriavidus</taxon>
    </lineage>
</organism>
<feature type="chain" id="PRO_0000257111" description="Probable transcriptional regulatory protein Rmet_0785">
    <location>
        <begin position="1"/>
        <end position="241"/>
    </location>
</feature>
<protein>
    <recommendedName>
        <fullName evidence="1">Probable transcriptional regulatory protein Rmet_0785</fullName>
    </recommendedName>
</protein>
<name>Y785_CUPMC</name>
<sequence length="241" mass="25959">MAGHSKWANIKHKKAAADAKRGKVWTRLIKEITVAAKLGGGEFDSNPRLRLAMEKAMDANMPKDNIQRAIQRGVGGLEGANYEEIRYEGYGLAGAAIIVDCLTDNRTRTVAEVRHAFSKHGGNMGTEGSVAFMFTHCGQFLFAPGTPEDKLMDAALEAGADDVVTNDDESIEVTCPPNDFGAVKAALEAAGFKAEVADVVMKPQNEVSFVGDDAVKMQKLLDALENLDDVQEVFTNAVVEE</sequence>
<gene>
    <name type="ordered locus">Rmet_0785</name>
</gene>
<reference key="1">
    <citation type="journal article" date="2010" name="PLoS ONE">
        <title>The complete genome sequence of Cupriavidus metallidurans strain CH34, a master survivalist in harsh and anthropogenic environments.</title>
        <authorList>
            <person name="Janssen P.J."/>
            <person name="Van Houdt R."/>
            <person name="Moors H."/>
            <person name="Monsieurs P."/>
            <person name="Morin N."/>
            <person name="Michaux A."/>
            <person name="Benotmane M.A."/>
            <person name="Leys N."/>
            <person name="Vallaeys T."/>
            <person name="Lapidus A."/>
            <person name="Monchy S."/>
            <person name="Medigue C."/>
            <person name="Taghavi S."/>
            <person name="McCorkle S."/>
            <person name="Dunn J."/>
            <person name="van der Lelie D."/>
            <person name="Mergeay M."/>
        </authorList>
    </citation>
    <scope>NUCLEOTIDE SEQUENCE [LARGE SCALE GENOMIC DNA]</scope>
    <source>
        <strain>ATCC 43123 / DSM 2839 / NBRC 102507 / CH34</strain>
    </source>
</reference>
<keyword id="KW-0963">Cytoplasm</keyword>
<keyword id="KW-0238">DNA-binding</keyword>
<keyword id="KW-1185">Reference proteome</keyword>
<keyword id="KW-0804">Transcription</keyword>
<keyword id="KW-0805">Transcription regulation</keyword>
<dbReference type="EMBL" id="CP000352">
    <property type="protein sequence ID" value="ABF07671.1"/>
    <property type="molecule type" value="Genomic_DNA"/>
</dbReference>
<dbReference type="RefSeq" id="WP_011515625.1">
    <property type="nucleotide sequence ID" value="NC_007973.1"/>
</dbReference>
<dbReference type="SMR" id="Q1LQA5"/>
<dbReference type="STRING" id="266264.Rmet_0785"/>
<dbReference type="KEGG" id="rme:Rmet_0785"/>
<dbReference type="eggNOG" id="COG0217">
    <property type="taxonomic scope" value="Bacteria"/>
</dbReference>
<dbReference type="HOGENOM" id="CLU_062974_2_2_4"/>
<dbReference type="Proteomes" id="UP000002429">
    <property type="component" value="Chromosome"/>
</dbReference>
<dbReference type="GO" id="GO:0005829">
    <property type="term" value="C:cytosol"/>
    <property type="evidence" value="ECO:0007669"/>
    <property type="project" value="TreeGrafter"/>
</dbReference>
<dbReference type="GO" id="GO:0003677">
    <property type="term" value="F:DNA binding"/>
    <property type="evidence" value="ECO:0007669"/>
    <property type="project" value="UniProtKB-UniRule"/>
</dbReference>
<dbReference type="GO" id="GO:0006355">
    <property type="term" value="P:regulation of DNA-templated transcription"/>
    <property type="evidence" value="ECO:0007669"/>
    <property type="project" value="UniProtKB-UniRule"/>
</dbReference>
<dbReference type="FunFam" id="1.10.10.200:FF:000001">
    <property type="entry name" value="Probable transcriptional regulatory protein YebC"/>
    <property type="match status" value="1"/>
</dbReference>
<dbReference type="FunFam" id="3.30.70.980:FF:000002">
    <property type="entry name" value="Probable transcriptional regulatory protein YebC"/>
    <property type="match status" value="1"/>
</dbReference>
<dbReference type="Gene3D" id="1.10.10.200">
    <property type="match status" value="1"/>
</dbReference>
<dbReference type="Gene3D" id="3.30.70.980">
    <property type="match status" value="2"/>
</dbReference>
<dbReference type="HAMAP" id="MF_00693">
    <property type="entry name" value="Transcrip_reg_TACO1"/>
    <property type="match status" value="1"/>
</dbReference>
<dbReference type="InterPro" id="IPR017856">
    <property type="entry name" value="Integrase-like_N"/>
</dbReference>
<dbReference type="InterPro" id="IPR048300">
    <property type="entry name" value="TACO1_YebC-like_2nd/3rd_dom"/>
</dbReference>
<dbReference type="InterPro" id="IPR049083">
    <property type="entry name" value="TACO1_YebC_N"/>
</dbReference>
<dbReference type="InterPro" id="IPR002876">
    <property type="entry name" value="Transcrip_reg_TACO1-like"/>
</dbReference>
<dbReference type="InterPro" id="IPR026564">
    <property type="entry name" value="Transcrip_reg_TACO1-like_dom3"/>
</dbReference>
<dbReference type="InterPro" id="IPR029072">
    <property type="entry name" value="YebC-like"/>
</dbReference>
<dbReference type="NCBIfam" id="NF001030">
    <property type="entry name" value="PRK00110.1"/>
    <property type="match status" value="1"/>
</dbReference>
<dbReference type="NCBIfam" id="NF009044">
    <property type="entry name" value="PRK12378.1"/>
    <property type="match status" value="1"/>
</dbReference>
<dbReference type="NCBIfam" id="TIGR01033">
    <property type="entry name" value="YebC/PmpR family DNA-binding transcriptional regulator"/>
    <property type="match status" value="1"/>
</dbReference>
<dbReference type="PANTHER" id="PTHR12532:SF6">
    <property type="entry name" value="TRANSCRIPTIONAL REGULATORY PROTEIN YEBC-RELATED"/>
    <property type="match status" value="1"/>
</dbReference>
<dbReference type="PANTHER" id="PTHR12532">
    <property type="entry name" value="TRANSLATIONAL ACTIVATOR OF CYTOCHROME C OXIDASE 1"/>
    <property type="match status" value="1"/>
</dbReference>
<dbReference type="Pfam" id="PF20772">
    <property type="entry name" value="TACO1_YebC_N"/>
    <property type="match status" value="1"/>
</dbReference>
<dbReference type="Pfam" id="PF01709">
    <property type="entry name" value="Transcrip_reg"/>
    <property type="match status" value="1"/>
</dbReference>
<dbReference type="SUPFAM" id="SSF75625">
    <property type="entry name" value="YebC-like"/>
    <property type="match status" value="1"/>
</dbReference>
<comment type="subcellular location">
    <subcellularLocation>
        <location evidence="1">Cytoplasm</location>
    </subcellularLocation>
</comment>
<comment type="similarity">
    <text evidence="1">Belongs to the TACO1 family.</text>
</comment>
<accession>Q1LQA5</accession>